<accession>Q5QQ55</accession>
<name>XYLT_CIOIN</name>
<comment type="function">
    <text>Catalyzes the first step in biosynthesis of glycosaminoglycan. Transfers D-xylose from UDP-D-xylose to specific serine residues of the core protein. Initial enzyme in the biosynthesis of chondroitin sulfate and dermatan sulfate proteoglycans in fibroblasts and chondrocytes.</text>
</comment>
<comment type="catalytic activity">
    <reaction>
        <text>UDP-alpha-D-xylose + L-seryl-[protein] = 3-O-(beta-D-xylosyl)-L-seryl-[protein] + UDP + H(+)</text>
        <dbReference type="Rhea" id="RHEA:50192"/>
        <dbReference type="Rhea" id="RHEA-COMP:9863"/>
        <dbReference type="Rhea" id="RHEA-COMP:12567"/>
        <dbReference type="ChEBI" id="CHEBI:15378"/>
        <dbReference type="ChEBI" id="CHEBI:29999"/>
        <dbReference type="ChEBI" id="CHEBI:57632"/>
        <dbReference type="ChEBI" id="CHEBI:58223"/>
        <dbReference type="ChEBI" id="CHEBI:132085"/>
        <dbReference type="EC" id="2.4.2.26"/>
    </reaction>
</comment>
<comment type="cofactor">
    <cofactor evidence="1">
        <name>a divalent metal cation</name>
        <dbReference type="ChEBI" id="CHEBI:60240"/>
    </cofactor>
</comment>
<comment type="pathway">
    <text>Glycan metabolism; chondroitin sulfate biosynthesis.</text>
</comment>
<comment type="pathway">
    <text>Glycan metabolism; heparan sulfate biosynthesis.</text>
</comment>
<comment type="subcellular location">
    <subcellularLocation>
        <location evidence="1">Endoplasmic reticulum membrane</location>
        <topology evidence="1">Single-pass type II membrane protein</topology>
    </subcellularLocation>
    <subcellularLocation>
        <location evidence="1">Golgi apparatus membrane</location>
        <topology evidence="1">Single-pass type II membrane protein</topology>
    </subcellularLocation>
</comment>
<comment type="similarity">
    <text evidence="5">Belongs to the glycosyltransferase 14 family. XylT subfamily.</text>
</comment>
<proteinExistence type="evidence at transcript level"/>
<evidence type="ECO:0000250" key="1"/>
<evidence type="ECO:0000250" key="2">
    <source>
        <dbReference type="UniProtKB" id="Q86Y38"/>
    </source>
</evidence>
<evidence type="ECO:0000255" key="3"/>
<evidence type="ECO:0000256" key="4">
    <source>
        <dbReference type="SAM" id="MobiDB-lite"/>
    </source>
</evidence>
<evidence type="ECO:0000305" key="5"/>
<dbReference type="EC" id="2.4.2.26"/>
<dbReference type="EMBL" id="AJ866720">
    <property type="protein sequence ID" value="CAI28924.1"/>
    <property type="molecule type" value="mRNA"/>
</dbReference>
<dbReference type="RefSeq" id="NP_001029012.1">
    <property type="nucleotide sequence ID" value="NM_001033840.1"/>
</dbReference>
<dbReference type="SMR" id="Q5QQ55"/>
<dbReference type="FunCoup" id="Q5QQ55">
    <property type="interactions" value="252"/>
</dbReference>
<dbReference type="STRING" id="7719.ENSCINP00000009027"/>
<dbReference type="CAZy" id="GT14">
    <property type="family name" value="Glycosyltransferase Family 14"/>
</dbReference>
<dbReference type="GlyCosmos" id="Q5QQ55">
    <property type="glycosylation" value="3 sites, No reported glycans"/>
</dbReference>
<dbReference type="Ensembl" id="ENSCINT00000009027.3">
    <property type="protein sequence ID" value="ENSCINP00000009027.3"/>
    <property type="gene ID" value="ENSCING00000004363.3"/>
</dbReference>
<dbReference type="GeneID" id="619275"/>
<dbReference type="KEGG" id="cin:619275"/>
<dbReference type="CTD" id="619275"/>
<dbReference type="eggNOG" id="KOG0799">
    <property type="taxonomic scope" value="Eukaryota"/>
</dbReference>
<dbReference type="GeneTree" id="ENSGT00940000169133"/>
<dbReference type="HOGENOM" id="CLU_012840_0_0_1"/>
<dbReference type="InParanoid" id="Q5QQ55"/>
<dbReference type="OMA" id="PRTCKHE"/>
<dbReference type="OrthoDB" id="2019572at2759"/>
<dbReference type="TreeFam" id="TF315534"/>
<dbReference type="UniPathway" id="UPA00755"/>
<dbReference type="UniPathway" id="UPA00756"/>
<dbReference type="Proteomes" id="UP000008144">
    <property type="component" value="Chromosome 3"/>
</dbReference>
<dbReference type="GO" id="GO:0005789">
    <property type="term" value="C:endoplasmic reticulum membrane"/>
    <property type="evidence" value="ECO:0007669"/>
    <property type="project" value="UniProtKB-SubCell"/>
</dbReference>
<dbReference type="GO" id="GO:0000139">
    <property type="term" value="C:Golgi membrane"/>
    <property type="evidence" value="ECO:0007669"/>
    <property type="project" value="UniProtKB-SubCell"/>
</dbReference>
<dbReference type="GO" id="GO:0046872">
    <property type="term" value="F:metal ion binding"/>
    <property type="evidence" value="ECO:0007669"/>
    <property type="project" value="UniProtKB-KW"/>
</dbReference>
<dbReference type="GO" id="GO:0030158">
    <property type="term" value="F:protein xylosyltransferase activity"/>
    <property type="evidence" value="ECO:0000318"/>
    <property type="project" value="GO_Central"/>
</dbReference>
<dbReference type="GO" id="GO:0050650">
    <property type="term" value="P:chondroitin sulfate proteoglycan biosynthetic process"/>
    <property type="evidence" value="ECO:0000318"/>
    <property type="project" value="GO_Central"/>
</dbReference>
<dbReference type="GO" id="GO:0015012">
    <property type="term" value="P:heparan sulfate proteoglycan biosynthetic process"/>
    <property type="evidence" value="ECO:0000318"/>
    <property type="project" value="GO_Central"/>
</dbReference>
<dbReference type="InterPro" id="IPR003406">
    <property type="entry name" value="Glyco_trans_14"/>
</dbReference>
<dbReference type="InterPro" id="IPR043538">
    <property type="entry name" value="XYLT"/>
</dbReference>
<dbReference type="InterPro" id="IPR024448">
    <property type="entry name" value="XylT_C"/>
</dbReference>
<dbReference type="PANTHER" id="PTHR46025">
    <property type="entry name" value="XYLOSYLTRANSFERASE OXT"/>
    <property type="match status" value="1"/>
</dbReference>
<dbReference type="PANTHER" id="PTHR46025:SF3">
    <property type="entry name" value="XYLOSYLTRANSFERASE OXT"/>
    <property type="match status" value="1"/>
</dbReference>
<dbReference type="Pfam" id="PF02485">
    <property type="entry name" value="Branch"/>
    <property type="match status" value="1"/>
</dbReference>
<dbReference type="Pfam" id="PF12529">
    <property type="entry name" value="Xylo_C"/>
    <property type="match status" value="1"/>
</dbReference>
<reference key="1">
    <citation type="submission" date="2004-11" db="EMBL/GenBank/DDBJ databases">
        <title>Phylogeny of animal protein xylosyltransferases.</title>
        <authorList>
            <person name="Ouzzine M."/>
            <person name="Fournel-Gigleux S."/>
            <person name="Mollicone R."/>
            <person name="Oriol R."/>
        </authorList>
    </citation>
    <scope>NUCLEOTIDE SEQUENCE [MRNA]</scope>
</reference>
<sequence>MSLHRTLRRFLRKWKALVYAVSFILLIQAFFTFQSSPNLMEEEHLRRLKELQIKKHQELANSMLQGERALVHGRDKLVLNPRDPGFREEFFKHSNNEINILEDHNIGQVDKMEKPVLKPNENKFEEIHFATEKVPEIIVKYQPKCDITIKDSISALSRATTDRCKQQIADAACKMQDGTLFPKSMPRTCKHESKFTFDAPMPTSFDPDIRPVRICYMLVVHGRAIRQLRRLLKVIYHRDHYYYIHVDKRSDYLLREVLKETEQYPNIKVAPWRMATIWGGSSLLQTLLRAISDVLRIWKDWDFFINLSALDFPIEKDEKLVQYLSKYRDKNFMKSHGREDEKFIRKQGLNRVFVECDQHMWRLGERQLPEGITVNGGSDWVALNRRLCDFAVNGNDQLLTQLKHWYEYTLLPAESFFHTLVQNSDLCETFVDNNIRVTNWNRARGCKCQYKHIVDWCGCSPNDFYPSDLVRLRTSRPVFFARKFEESINQEVVNHLDFKLYGDYPPGTPALHSLWENALRVNSKMPSDCNLSVVSMLQVEMHKKDEEFVGYVVTFDAGWVGRRGAGDDPATSEDGSRVQLQAFLSPQPSLRILDRSSNLAKRLETASVGTNWDVKELVIRDWGGLVGPNSDVHLVARWSRSEDDFVVTVVVIDPLNVVADYNDFRTPSKAAGVTETPLSLKKPLRPGRWLVRFYVQRQFTNICAELDFYVTPQEFKGGIEGDSVLREINRGVVDDAQVNAANRNLYSIRTTLNLARNNQAETELASESNHVAGLKLRNWVDFVVSSGWKAKDACLVAQSPETWREAQPRRCFMPRQGTPNLCENTNWSSLSPDPKTELISVKPDGRIR</sequence>
<organism>
    <name type="scientific">Ciona intestinalis</name>
    <name type="common">Transparent sea squirt</name>
    <name type="synonym">Ascidia intestinalis</name>
    <dbReference type="NCBI Taxonomy" id="7719"/>
    <lineage>
        <taxon>Eukaryota</taxon>
        <taxon>Metazoa</taxon>
        <taxon>Chordata</taxon>
        <taxon>Tunicata</taxon>
        <taxon>Ascidiacea</taxon>
        <taxon>Phlebobranchia</taxon>
        <taxon>Cionidae</taxon>
        <taxon>Ciona</taxon>
    </lineage>
</organism>
<keyword id="KW-1015">Disulfide bond</keyword>
<keyword id="KW-0256">Endoplasmic reticulum</keyword>
<keyword id="KW-0325">Glycoprotein</keyword>
<keyword id="KW-0328">Glycosyltransferase</keyword>
<keyword id="KW-0333">Golgi apparatus</keyword>
<keyword id="KW-0472">Membrane</keyword>
<keyword id="KW-0479">Metal-binding</keyword>
<keyword id="KW-1185">Reference proteome</keyword>
<keyword id="KW-0735">Signal-anchor</keyword>
<keyword id="KW-0808">Transferase</keyword>
<keyword id="KW-0812">Transmembrane</keyword>
<keyword id="KW-1133">Transmembrane helix</keyword>
<feature type="chain" id="PRO_0000191410" description="Xylosyltransferase">
    <location>
        <begin position="1"/>
        <end position="848"/>
    </location>
</feature>
<feature type="topological domain" description="Cytoplasmic" evidence="3">
    <location>
        <begin position="1"/>
        <end position="14"/>
    </location>
</feature>
<feature type="transmembrane region" description="Helical; Signal-anchor for type II membrane protein" evidence="3">
    <location>
        <begin position="15"/>
        <end position="35"/>
    </location>
</feature>
<feature type="topological domain" description="Lumenal" evidence="3">
    <location>
        <begin position="36"/>
        <end position="843"/>
    </location>
</feature>
<feature type="region of interest" description="Disordered" evidence="4">
    <location>
        <begin position="824"/>
        <end position="848"/>
    </location>
</feature>
<feature type="binding site" evidence="2">
    <location>
        <position position="219"/>
    </location>
    <ligand>
        <name>UDP-alpha-D-xylose</name>
        <dbReference type="ChEBI" id="CHEBI:57632"/>
    </ligand>
</feature>
<feature type="binding site" evidence="2">
    <location>
        <position position="247"/>
    </location>
    <ligand>
        <name>UDP-alpha-D-xylose</name>
        <dbReference type="ChEBI" id="CHEBI:57632"/>
    </ligand>
</feature>
<feature type="binding site" evidence="2">
    <location>
        <begin position="276"/>
        <end position="278"/>
    </location>
    <ligand>
        <name>UDP-alpha-D-xylose</name>
        <dbReference type="ChEBI" id="CHEBI:57632"/>
    </ligand>
</feature>
<feature type="binding site" evidence="2">
    <location>
        <begin position="379"/>
        <end position="380"/>
    </location>
    <ligand>
        <name>UDP-alpha-D-xylose</name>
        <dbReference type="ChEBI" id="CHEBI:57632"/>
    </ligand>
</feature>
<feature type="binding site" evidence="2">
    <location>
        <position position="460"/>
    </location>
    <ligand>
        <name>UDP-alpha-D-xylose</name>
        <dbReference type="ChEBI" id="CHEBI:57632"/>
    </ligand>
</feature>
<feature type="binding site" evidence="2">
    <location>
        <begin position="482"/>
        <end position="483"/>
    </location>
    <ligand>
        <name>UDP-alpha-D-xylose</name>
        <dbReference type="ChEBI" id="CHEBI:57632"/>
    </ligand>
</feature>
<feature type="glycosylation site" description="N-linked (GlcNAc...) asparagine" evidence="3">
    <location>
        <position position="306"/>
    </location>
</feature>
<feature type="glycosylation site" description="N-linked (GlcNAc...) asparagine" evidence="3">
    <location>
        <position position="530"/>
    </location>
</feature>
<feature type="glycosylation site" description="N-linked (GlcNAc...) asparagine" evidence="3">
    <location>
        <position position="826"/>
    </location>
</feature>
<feature type="disulfide bond" evidence="2">
    <location>
        <begin position="145"/>
        <end position="173"/>
    </location>
</feature>
<feature type="disulfide bond" evidence="2">
    <location>
        <begin position="189"/>
        <end position="427"/>
    </location>
</feature>
<feature type="disulfide bond" evidence="2">
    <location>
        <begin position="446"/>
        <end position="459"/>
    </location>
</feature>
<feature type="disulfide bond" evidence="2">
    <location>
        <begin position="448"/>
        <end position="457"/>
    </location>
</feature>
<feature type="disulfide bond" evidence="2">
    <location>
        <begin position="529"/>
        <end position="811"/>
    </location>
</feature>
<feature type="disulfide bond" evidence="2">
    <location>
        <begin position="794"/>
        <end position="822"/>
    </location>
</feature>
<gene>
    <name type="primary">xt</name>
</gene>
<protein>
    <recommendedName>
        <fullName>Xylosyltransferase</fullName>
        <ecNumber>2.4.2.26</ecNumber>
    </recommendedName>
    <alternativeName>
        <fullName>Peptide O-xylosyltransferase</fullName>
    </alternativeName>
</protein>